<gene>
    <name type="primary">rps3</name>
    <name type="ordered locus">PS003</name>
</gene>
<accession>Q6L3G0</accession>
<keyword id="KW-0150">Chloroplast</keyword>
<keyword id="KW-0934">Plastid</keyword>
<keyword id="KW-0687">Ribonucleoprotein</keyword>
<keyword id="KW-0689">Ribosomal protein</keyword>
<keyword id="KW-0694">RNA-binding</keyword>
<keyword id="KW-0699">rRNA-binding</keyword>
<proteinExistence type="inferred from homology"/>
<geneLocation type="chloroplast"/>
<feature type="chain" id="PRO_0000130304" description="Small ribosomal subunit protein uS3c">
    <location>
        <begin position="1"/>
        <end position="224"/>
    </location>
</feature>
<feature type="domain" description="KH type-2">
    <location>
        <begin position="43"/>
        <end position="124"/>
    </location>
</feature>
<organism>
    <name type="scientific">Saccharum hybrid</name>
    <name type="common">Sugarcane</name>
    <dbReference type="NCBI Taxonomy" id="15819"/>
    <lineage>
        <taxon>Eukaryota</taxon>
        <taxon>Viridiplantae</taxon>
        <taxon>Streptophyta</taxon>
        <taxon>Embryophyta</taxon>
        <taxon>Tracheophyta</taxon>
        <taxon>Spermatophyta</taxon>
        <taxon>Magnoliopsida</taxon>
        <taxon>Liliopsida</taxon>
        <taxon>Poales</taxon>
        <taxon>Poaceae</taxon>
        <taxon>PACMAD clade</taxon>
        <taxon>Panicoideae</taxon>
        <taxon>Andropogonodae</taxon>
        <taxon>Andropogoneae</taxon>
        <taxon>Saccharinae</taxon>
        <taxon>Saccharum</taxon>
    </lineage>
</organism>
<evidence type="ECO:0000250" key="1"/>
<evidence type="ECO:0000305" key="2"/>
<sequence>MGQKINPLGFRLGTTQNHHSFWFAQPKNYSEGLQEDKKIRNCIKNYIQKNRKKGSNRKMESDSSSEVITHIEIQKEIDTIHVIIHIGFPNLLKKKGAIEELEKDLQKEVNSVNQRLNIAIEKVKEPYRQPNILAEYIAFQLKNRVSFRKAMKKAIELTKKADIKGIKIQIAGRLAGKEIARAECIKKGRLPLQTIRAKIDYCCYPIRTIYGVLGVKIWIFVEEE</sequence>
<dbReference type="EMBL" id="AE009947">
    <property type="protein sequence ID" value="AAT44633.1"/>
    <property type="molecule type" value="Genomic_DNA"/>
</dbReference>
<dbReference type="SMR" id="Q6L3G0"/>
<dbReference type="GO" id="GO:0009507">
    <property type="term" value="C:chloroplast"/>
    <property type="evidence" value="ECO:0007669"/>
    <property type="project" value="UniProtKB-SubCell"/>
</dbReference>
<dbReference type="GO" id="GO:0022627">
    <property type="term" value="C:cytosolic small ribosomal subunit"/>
    <property type="evidence" value="ECO:0007669"/>
    <property type="project" value="TreeGrafter"/>
</dbReference>
<dbReference type="GO" id="GO:0019843">
    <property type="term" value="F:rRNA binding"/>
    <property type="evidence" value="ECO:0007669"/>
    <property type="project" value="UniProtKB-KW"/>
</dbReference>
<dbReference type="GO" id="GO:0003735">
    <property type="term" value="F:structural constituent of ribosome"/>
    <property type="evidence" value="ECO:0007669"/>
    <property type="project" value="InterPro"/>
</dbReference>
<dbReference type="GO" id="GO:0006412">
    <property type="term" value="P:translation"/>
    <property type="evidence" value="ECO:0007669"/>
    <property type="project" value="UniProtKB-UniRule"/>
</dbReference>
<dbReference type="CDD" id="cd02412">
    <property type="entry name" value="KH-II_30S_S3"/>
    <property type="match status" value="1"/>
</dbReference>
<dbReference type="FunFam" id="3.30.1140.32:FF:000003">
    <property type="entry name" value="30S ribosomal protein S3, chloroplastic"/>
    <property type="match status" value="1"/>
</dbReference>
<dbReference type="FunFam" id="3.30.300.20:FF:000008">
    <property type="entry name" value="30S ribosomal protein S3, chloroplastic"/>
    <property type="match status" value="1"/>
</dbReference>
<dbReference type="Gene3D" id="3.30.300.20">
    <property type="match status" value="1"/>
</dbReference>
<dbReference type="Gene3D" id="3.30.1140.32">
    <property type="entry name" value="Ribosomal protein S3, C-terminal domain"/>
    <property type="match status" value="1"/>
</dbReference>
<dbReference type="HAMAP" id="MF_01309_B">
    <property type="entry name" value="Ribosomal_uS3_B"/>
    <property type="match status" value="1"/>
</dbReference>
<dbReference type="InterPro" id="IPR015946">
    <property type="entry name" value="KH_dom-like_a/b"/>
</dbReference>
<dbReference type="InterPro" id="IPR009019">
    <property type="entry name" value="KH_sf_prok-type"/>
</dbReference>
<dbReference type="InterPro" id="IPR036419">
    <property type="entry name" value="Ribosomal_S3_C_sf"/>
</dbReference>
<dbReference type="InterPro" id="IPR005704">
    <property type="entry name" value="Ribosomal_uS3_bac-typ"/>
</dbReference>
<dbReference type="InterPro" id="IPR001351">
    <property type="entry name" value="Ribosomal_uS3_C"/>
</dbReference>
<dbReference type="InterPro" id="IPR018280">
    <property type="entry name" value="Ribosomal_uS3_CS"/>
</dbReference>
<dbReference type="NCBIfam" id="TIGR01009">
    <property type="entry name" value="rpsC_bact"/>
    <property type="match status" value="1"/>
</dbReference>
<dbReference type="PANTHER" id="PTHR11760">
    <property type="entry name" value="30S/40S RIBOSOMAL PROTEIN S3"/>
    <property type="match status" value="1"/>
</dbReference>
<dbReference type="PANTHER" id="PTHR11760:SF42">
    <property type="entry name" value="SMALL RIBOSOMAL SUBUNIT PROTEIN US3C"/>
    <property type="match status" value="1"/>
</dbReference>
<dbReference type="Pfam" id="PF00189">
    <property type="entry name" value="Ribosomal_S3_C"/>
    <property type="match status" value="1"/>
</dbReference>
<dbReference type="SUPFAM" id="SSF54814">
    <property type="entry name" value="Prokaryotic type KH domain (KH-domain type II)"/>
    <property type="match status" value="1"/>
</dbReference>
<dbReference type="SUPFAM" id="SSF54821">
    <property type="entry name" value="Ribosomal protein S3 C-terminal domain"/>
    <property type="match status" value="1"/>
</dbReference>
<dbReference type="PROSITE" id="PS00548">
    <property type="entry name" value="RIBOSOMAL_S3"/>
    <property type="match status" value="1"/>
</dbReference>
<name>RR3_SACHY</name>
<reference key="1">
    <citation type="journal article" date="2004" name="Curr. Genet.">
        <title>Structural features and transcript-editing analysis of sugarcane (Saccharum officinarum L.) chloroplast genome.</title>
        <authorList>
            <person name="Calsa T. Jr."/>
            <person name="Carraro D.M."/>
            <person name="Benatti M.R."/>
            <person name="Barbosa A.C."/>
            <person name="Kitajima J.P."/>
            <person name="Carrer H."/>
        </authorList>
    </citation>
    <scope>NUCLEOTIDE SEQUENCE [LARGE SCALE GENOMIC DNA]</scope>
    <source>
        <strain>cv. SP-80-3280</strain>
    </source>
</reference>
<protein>
    <recommendedName>
        <fullName evidence="2">Small ribosomal subunit protein uS3c</fullName>
    </recommendedName>
    <alternativeName>
        <fullName>30S ribosomal protein S3, chloroplastic</fullName>
    </alternativeName>
</protein>
<comment type="subunit">
    <text evidence="1">Part of the 30S ribosomal subunit.</text>
</comment>
<comment type="subcellular location">
    <subcellularLocation>
        <location>Plastid</location>
        <location>Chloroplast</location>
    </subcellularLocation>
</comment>
<comment type="similarity">
    <text evidence="2">Belongs to the universal ribosomal protein uS3 family.</text>
</comment>